<keyword id="KW-0067">ATP-binding</keyword>
<keyword id="KW-0963">Cytoplasm</keyword>
<keyword id="KW-0227">DNA damage</keyword>
<keyword id="KW-0234">DNA repair</keyword>
<keyword id="KW-0235">DNA replication</keyword>
<keyword id="KW-0238">DNA-binding</keyword>
<keyword id="KW-0547">Nucleotide-binding</keyword>
<keyword id="KW-0742">SOS response</keyword>
<evidence type="ECO:0000255" key="1">
    <source>
        <dbReference type="HAMAP-Rule" id="MF_00365"/>
    </source>
</evidence>
<reference key="1">
    <citation type="journal article" date="2005" name="Genome Res.">
        <title>Comparative and functional genomic analyses of the pathogenicity of phytopathogen Xanthomonas campestris pv. campestris.</title>
        <authorList>
            <person name="Qian W."/>
            <person name="Jia Y."/>
            <person name="Ren S.-X."/>
            <person name="He Y.-Q."/>
            <person name="Feng J.-X."/>
            <person name="Lu L.-F."/>
            <person name="Sun Q."/>
            <person name="Ying G."/>
            <person name="Tang D.-J."/>
            <person name="Tang H."/>
            <person name="Wu W."/>
            <person name="Hao P."/>
            <person name="Wang L."/>
            <person name="Jiang B.-L."/>
            <person name="Zeng S."/>
            <person name="Gu W.-Y."/>
            <person name="Lu G."/>
            <person name="Rong L."/>
            <person name="Tian Y."/>
            <person name="Yao Z."/>
            <person name="Fu G."/>
            <person name="Chen B."/>
            <person name="Fang R."/>
            <person name="Qiang B."/>
            <person name="Chen Z."/>
            <person name="Zhao G.-P."/>
            <person name="Tang J.-L."/>
            <person name="He C."/>
        </authorList>
    </citation>
    <scope>NUCLEOTIDE SEQUENCE [LARGE SCALE GENOMIC DNA]</scope>
    <source>
        <strain>8004</strain>
    </source>
</reference>
<feature type="chain" id="PRO_0000236161" description="DNA replication and repair protein RecF">
    <location>
        <begin position="1"/>
        <end position="368"/>
    </location>
</feature>
<feature type="binding site" evidence="1">
    <location>
        <begin position="30"/>
        <end position="37"/>
    </location>
    <ligand>
        <name>ATP</name>
        <dbReference type="ChEBI" id="CHEBI:30616"/>
    </ligand>
</feature>
<accession>Q4V0S6</accession>
<organism>
    <name type="scientific">Xanthomonas campestris pv. campestris (strain 8004)</name>
    <dbReference type="NCBI Taxonomy" id="314565"/>
    <lineage>
        <taxon>Bacteria</taxon>
        <taxon>Pseudomonadati</taxon>
        <taxon>Pseudomonadota</taxon>
        <taxon>Gammaproteobacteria</taxon>
        <taxon>Lysobacterales</taxon>
        <taxon>Lysobacteraceae</taxon>
        <taxon>Xanthomonas</taxon>
    </lineage>
</organism>
<name>RECF_XANC8</name>
<protein>
    <recommendedName>
        <fullName evidence="1">DNA replication and repair protein RecF</fullName>
    </recommendedName>
</protein>
<proteinExistence type="inferred from homology"/>
<sequence>MHVARLSIHRLRRFEAVEFHPASTLNLLTGDNGAGKTSVLEALHVMAYGRSFRGRVRDGLIRQGGQDLEIFVEWRERAGDSTERTRRAGLRHSGQEWTGRLDGEDVAQLGSLCAALAVVTFEPGSHVLISGGGEPRRRFLDWGLFHVEPDFLALWRRYARALKQRNALLKQGAQPQMLDAWDHELAESGETLTSRRLQYLERLQERLVPVATAIAPSLGLSALTFAPGWRRHEVSLADALLLARERDRQNGYTSQGPHRADWAPLFDALPGKDALSRGQAKLTALACLLAQAEDFAHERGEWPIMALDDLGSELDRHHQARVIQRLASAPAQVLITATELPPGLADAGKTLRRFHVEHGQLVPTTAAD</sequence>
<comment type="function">
    <text evidence="1">The RecF protein is involved in DNA metabolism; it is required for DNA replication and normal SOS inducibility. RecF binds preferentially to single-stranded, linear DNA. It also seems to bind ATP.</text>
</comment>
<comment type="subcellular location">
    <subcellularLocation>
        <location evidence="1">Cytoplasm</location>
    </subcellularLocation>
</comment>
<comment type="similarity">
    <text evidence="1">Belongs to the RecF family.</text>
</comment>
<dbReference type="EMBL" id="CP000050">
    <property type="protein sequence ID" value="AAY47097.1"/>
    <property type="molecule type" value="Genomic_DNA"/>
</dbReference>
<dbReference type="RefSeq" id="WP_011035261.1">
    <property type="nucleotide sequence ID" value="NZ_CP155948.1"/>
</dbReference>
<dbReference type="SMR" id="Q4V0S6"/>
<dbReference type="KEGG" id="xcb:XC_0003"/>
<dbReference type="HOGENOM" id="CLU_040267_0_0_6"/>
<dbReference type="Proteomes" id="UP000000420">
    <property type="component" value="Chromosome"/>
</dbReference>
<dbReference type="GO" id="GO:0005737">
    <property type="term" value="C:cytoplasm"/>
    <property type="evidence" value="ECO:0007669"/>
    <property type="project" value="UniProtKB-SubCell"/>
</dbReference>
<dbReference type="GO" id="GO:0005524">
    <property type="term" value="F:ATP binding"/>
    <property type="evidence" value="ECO:0007669"/>
    <property type="project" value="UniProtKB-UniRule"/>
</dbReference>
<dbReference type="GO" id="GO:0003697">
    <property type="term" value="F:single-stranded DNA binding"/>
    <property type="evidence" value="ECO:0007669"/>
    <property type="project" value="UniProtKB-UniRule"/>
</dbReference>
<dbReference type="GO" id="GO:0006260">
    <property type="term" value="P:DNA replication"/>
    <property type="evidence" value="ECO:0007669"/>
    <property type="project" value="UniProtKB-UniRule"/>
</dbReference>
<dbReference type="GO" id="GO:0000731">
    <property type="term" value="P:DNA synthesis involved in DNA repair"/>
    <property type="evidence" value="ECO:0007669"/>
    <property type="project" value="TreeGrafter"/>
</dbReference>
<dbReference type="GO" id="GO:0006302">
    <property type="term" value="P:double-strand break repair"/>
    <property type="evidence" value="ECO:0007669"/>
    <property type="project" value="TreeGrafter"/>
</dbReference>
<dbReference type="GO" id="GO:0009432">
    <property type="term" value="P:SOS response"/>
    <property type="evidence" value="ECO:0007669"/>
    <property type="project" value="UniProtKB-UniRule"/>
</dbReference>
<dbReference type="Gene3D" id="3.40.50.300">
    <property type="entry name" value="P-loop containing nucleotide triphosphate hydrolases"/>
    <property type="match status" value="1"/>
</dbReference>
<dbReference type="Gene3D" id="1.20.1050.90">
    <property type="entry name" value="RecF/RecN/SMC, N-terminal domain"/>
    <property type="match status" value="1"/>
</dbReference>
<dbReference type="HAMAP" id="MF_00365">
    <property type="entry name" value="RecF"/>
    <property type="match status" value="1"/>
</dbReference>
<dbReference type="InterPro" id="IPR001238">
    <property type="entry name" value="DNA-binding_RecF"/>
</dbReference>
<dbReference type="InterPro" id="IPR018078">
    <property type="entry name" value="DNA-binding_RecF_CS"/>
</dbReference>
<dbReference type="InterPro" id="IPR027417">
    <property type="entry name" value="P-loop_NTPase"/>
</dbReference>
<dbReference type="InterPro" id="IPR003395">
    <property type="entry name" value="RecF/RecN/SMC_N"/>
</dbReference>
<dbReference type="InterPro" id="IPR042174">
    <property type="entry name" value="RecF_2"/>
</dbReference>
<dbReference type="NCBIfam" id="TIGR00611">
    <property type="entry name" value="recf"/>
    <property type="match status" value="1"/>
</dbReference>
<dbReference type="PANTHER" id="PTHR32182">
    <property type="entry name" value="DNA REPLICATION AND REPAIR PROTEIN RECF"/>
    <property type="match status" value="1"/>
</dbReference>
<dbReference type="PANTHER" id="PTHR32182:SF0">
    <property type="entry name" value="DNA REPLICATION AND REPAIR PROTEIN RECF"/>
    <property type="match status" value="1"/>
</dbReference>
<dbReference type="Pfam" id="PF02463">
    <property type="entry name" value="SMC_N"/>
    <property type="match status" value="1"/>
</dbReference>
<dbReference type="SUPFAM" id="SSF52540">
    <property type="entry name" value="P-loop containing nucleoside triphosphate hydrolases"/>
    <property type="match status" value="1"/>
</dbReference>
<dbReference type="PROSITE" id="PS00617">
    <property type="entry name" value="RECF_1"/>
    <property type="match status" value="1"/>
</dbReference>
<dbReference type="PROSITE" id="PS00618">
    <property type="entry name" value="RECF_2"/>
    <property type="match status" value="1"/>
</dbReference>
<gene>
    <name evidence="1" type="primary">recF</name>
    <name type="ordered locus">XC_0003</name>
</gene>